<accession>Q1D778</accession>
<dbReference type="EMBL" id="CP000113">
    <property type="protein sequence ID" value="ABF92834.1"/>
    <property type="molecule type" value="Genomic_DNA"/>
</dbReference>
<dbReference type="RefSeq" id="WP_011553340.1">
    <property type="nucleotide sequence ID" value="NC_008095.1"/>
</dbReference>
<dbReference type="SMR" id="Q1D778"/>
<dbReference type="STRING" id="246197.MXAN_3296"/>
<dbReference type="EnsemblBacteria" id="ABF92834">
    <property type="protein sequence ID" value="ABF92834"/>
    <property type="gene ID" value="MXAN_3296"/>
</dbReference>
<dbReference type="GeneID" id="41360649"/>
<dbReference type="KEGG" id="mxa:MXAN_3296"/>
<dbReference type="eggNOG" id="COG0049">
    <property type="taxonomic scope" value="Bacteria"/>
</dbReference>
<dbReference type="HOGENOM" id="CLU_072226_1_1_7"/>
<dbReference type="OrthoDB" id="9807653at2"/>
<dbReference type="Proteomes" id="UP000002402">
    <property type="component" value="Chromosome"/>
</dbReference>
<dbReference type="GO" id="GO:0015935">
    <property type="term" value="C:small ribosomal subunit"/>
    <property type="evidence" value="ECO:0007669"/>
    <property type="project" value="InterPro"/>
</dbReference>
<dbReference type="GO" id="GO:0019843">
    <property type="term" value="F:rRNA binding"/>
    <property type="evidence" value="ECO:0007669"/>
    <property type="project" value="UniProtKB-UniRule"/>
</dbReference>
<dbReference type="GO" id="GO:0003735">
    <property type="term" value="F:structural constituent of ribosome"/>
    <property type="evidence" value="ECO:0007669"/>
    <property type="project" value="InterPro"/>
</dbReference>
<dbReference type="GO" id="GO:0000049">
    <property type="term" value="F:tRNA binding"/>
    <property type="evidence" value="ECO:0007669"/>
    <property type="project" value="UniProtKB-UniRule"/>
</dbReference>
<dbReference type="GO" id="GO:0006412">
    <property type="term" value="P:translation"/>
    <property type="evidence" value="ECO:0007669"/>
    <property type="project" value="UniProtKB-UniRule"/>
</dbReference>
<dbReference type="CDD" id="cd14869">
    <property type="entry name" value="uS7_Bacteria"/>
    <property type="match status" value="1"/>
</dbReference>
<dbReference type="FunFam" id="1.10.455.10:FF:000001">
    <property type="entry name" value="30S ribosomal protein S7"/>
    <property type="match status" value="1"/>
</dbReference>
<dbReference type="Gene3D" id="1.10.455.10">
    <property type="entry name" value="Ribosomal protein S7 domain"/>
    <property type="match status" value="1"/>
</dbReference>
<dbReference type="HAMAP" id="MF_00480_B">
    <property type="entry name" value="Ribosomal_uS7_B"/>
    <property type="match status" value="1"/>
</dbReference>
<dbReference type="InterPro" id="IPR000235">
    <property type="entry name" value="Ribosomal_uS7"/>
</dbReference>
<dbReference type="InterPro" id="IPR005717">
    <property type="entry name" value="Ribosomal_uS7_bac/org-type"/>
</dbReference>
<dbReference type="InterPro" id="IPR020606">
    <property type="entry name" value="Ribosomal_uS7_CS"/>
</dbReference>
<dbReference type="InterPro" id="IPR023798">
    <property type="entry name" value="Ribosomal_uS7_dom"/>
</dbReference>
<dbReference type="InterPro" id="IPR036823">
    <property type="entry name" value="Ribosomal_uS7_dom_sf"/>
</dbReference>
<dbReference type="NCBIfam" id="TIGR01029">
    <property type="entry name" value="rpsG_bact"/>
    <property type="match status" value="1"/>
</dbReference>
<dbReference type="PANTHER" id="PTHR11205">
    <property type="entry name" value="RIBOSOMAL PROTEIN S7"/>
    <property type="match status" value="1"/>
</dbReference>
<dbReference type="Pfam" id="PF00177">
    <property type="entry name" value="Ribosomal_S7"/>
    <property type="match status" value="1"/>
</dbReference>
<dbReference type="PIRSF" id="PIRSF002122">
    <property type="entry name" value="RPS7p_RPS7a_RPS5e_RPS7o"/>
    <property type="match status" value="1"/>
</dbReference>
<dbReference type="SUPFAM" id="SSF47973">
    <property type="entry name" value="Ribosomal protein S7"/>
    <property type="match status" value="1"/>
</dbReference>
<dbReference type="PROSITE" id="PS00052">
    <property type="entry name" value="RIBOSOMAL_S7"/>
    <property type="match status" value="1"/>
</dbReference>
<comment type="function">
    <text evidence="1">One of the primary rRNA binding proteins, it binds directly to 16S rRNA where it nucleates assembly of the head domain of the 30S subunit. Is located at the subunit interface close to the decoding center, probably blocks exit of the E-site tRNA.</text>
</comment>
<comment type="subunit">
    <text evidence="1">Part of the 30S ribosomal subunit. Contacts proteins S9 and S11.</text>
</comment>
<comment type="similarity">
    <text evidence="1">Belongs to the universal ribosomal protein uS7 family.</text>
</comment>
<name>RS7_MYXXD</name>
<protein>
    <recommendedName>
        <fullName evidence="1">Small ribosomal subunit protein uS7</fullName>
    </recommendedName>
    <alternativeName>
        <fullName evidence="2">30S ribosomal protein S7</fullName>
    </alternativeName>
</protein>
<reference key="1">
    <citation type="journal article" date="2006" name="Proc. Natl. Acad. Sci. U.S.A.">
        <title>Evolution of sensory complexity recorded in a myxobacterial genome.</title>
        <authorList>
            <person name="Goldman B.S."/>
            <person name="Nierman W.C."/>
            <person name="Kaiser D."/>
            <person name="Slater S.C."/>
            <person name="Durkin A.S."/>
            <person name="Eisen J.A."/>
            <person name="Ronning C.M."/>
            <person name="Barbazuk W.B."/>
            <person name="Blanchard M."/>
            <person name="Field C."/>
            <person name="Halling C."/>
            <person name="Hinkle G."/>
            <person name="Iartchuk O."/>
            <person name="Kim H.S."/>
            <person name="Mackenzie C."/>
            <person name="Madupu R."/>
            <person name="Miller N."/>
            <person name="Shvartsbeyn A."/>
            <person name="Sullivan S.A."/>
            <person name="Vaudin M."/>
            <person name="Wiegand R."/>
            <person name="Kaplan H.B."/>
        </authorList>
    </citation>
    <scope>NUCLEOTIDE SEQUENCE [LARGE SCALE GENOMIC DNA]</scope>
    <source>
        <strain>DK1622</strain>
    </source>
</reference>
<organism>
    <name type="scientific">Myxococcus xanthus (strain DK1622)</name>
    <dbReference type="NCBI Taxonomy" id="246197"/>
    <lineage>
        <taxon>Bacteria</taxon>
        <taxon>Pseudomonadati</taxon>
        <taxon>Myxococcota</taxon>
        <taxon>Myxococcia</taxon>
        <taxon>Myxococcales</taxon>
        <taxon>Cystobacterineae</taxon>
        <taxon>Myxococcaceae</taxon>
        <taxon>Myxococcus</taxon>
    </lineage>
</organism>
<keyword id="KW-1185">Reference proteome</keyword>
<keyword id="KW-0687">Ribonucleoprotein</keyword>
<keyword id="KW-0689">Ribosomal protein</keyword>
<keyword id="KW-0694">RNA-binding</keyword>
<keyword id="KW-0699">rRNA-binding</keyword>
<keyword id="KW-0820">tRNA-binding</keyword>
<sequence>MPRRRVVAKRKILPDPKFQDRLVTKFVNDLMRKGKKSIAEGVCYGAFALIEERAKEDPLKTFKKALDNVKPVLEVKSRRVGGATYQVPVEVRQDRRVALGMRWIITYSKARGEKTMQEKLAGEIMDAANNRGNAVKKREDTHKMAEANKAFAHYRW</sequence>
<gene>
    <name evidence="1" type="primary">rpsG</name>
    <name type="ordered locus">MXAN_3296</name>
</gene>
<feature type="chain" id="PRO_1000014241" description="Small ribosomal subunit protein uS7">
    <location>
        <begin position="1"/>
        <end position="156"/>
    </location>
</feature>
<evidence type="ECO:0000255" key="1">
    <source>
        <dbReference type="HAMAP-Rule" id="MF_00480"/>
    </source>
</evidence>
<evidence type="ECO:0000305" key="2"/>
<proteinExistence type="inferred from homology"/>